<keyword id="KW-0058">Aromatic hydrocarbons catabolism</keyword>
<keyword id="KW-0210">Decarboxylase</keyword>
<keyword id="KW-0456">Lyase</keyword>
<evidence type="ECO:0000250" key="1">
    <source>
        <dbReference type="UniProtKB" id="P00881"/>
    </source>
</evidence>
<evidence type="ECO:0000305" key="2"/>
<gene>
    <name type="primary">pcaC</name>
    <name type="ordered locus">ACIAD1710</name>
</gene>
<proteinExistence type="inferred from homology"/>
<feature type="chain" id="PRO_0000079798" description="4-carboxymuconolactone decarboxylase">
    <location>
        <begin position="1"/>
        <end position="134"/>
    </location>
</feature>
<feature type="sequence conflict" description="In Ref. 1; AAC37152." evidence="2" ref="1">
    <original>MH</original>
    <variation>ID</variation>
    <location>
        <begin position="79"/>
        <end position="80"/>
    </location>
</feature>
<dbReference type="EC" id="4.1.1.44" evidence="1"/>
<dbReference type="EMBL" id="L05770">
    <property type="protein sequence ID" value="AAC37152.1"/>
    <property type="molecule type" value="Genomic_DNA"/>
</dbReference>
<dbReference type="EMBL" id="CR543861">
    <property type="protein sequence ID" value="CAG68552.1"/>
    <property type="molecule type" value="Genomic_DNA"/>
</dbReference>
<dbReference type="PIR" id="B35119">
    <property type="entry name" value="B35119"/>
</dbReference>
<dbReference type="RefSeq" id="WP_004926631.1">
    <property type="nucleotide sequence ID" value="NC_005966.1"/>
</dbReference>
<dbReference type="SMR" id="P20370"/>
<dbReference type="STRING" id="202950.GCA_001485005_03088"/>
<dbReference type="GeneID" id="45234097"/>
<dbReference type="KEGG" id="aci:ACIAD1710"/>
<dbReference type="eggNOG" id="COG0599">
    <property type="taxonomic scope" value="Bacteria"/>
</dbReference>
<dbReference type="HOGENOM" id="CLU_070025_3_1_6"/>
<dbReference type="OrthoDB" id="9801400at2"/>
<dbReference type="BioCyc" id="ASP62977:ACIAD_RS07880-MONOMER"/>
<dbReference type="UniPathway" id="UPA00157">
    <property type="reaction ID" value="UER00266"/>
</dbReference>
<dbReference type="Proteomes" id="UP000000430">
    <property type="component" value="Chromosome"/>
</dbReference>
<dbReference type="GO" id="GO:0047575">
    <property type="term" value="F:4-carboxymuconolactone decarboxylase activity"/>
    <property type="evidence" value="ECO:0007669"/>
    <property type="project" value="UniProtKB-EC"/>
</dbReference>
<dbReference type="GO" id="GO:0051920">
    <property type="term" value="F:peroxiredoxin activity"/>
    <property type="evidence" value="ECO:0007669"/>
    <property type="project" value="InterPro"/>
</dbReference>
<dbReference type="GO" id="GO:0042952">
    <property type="term" value="P:beta-ketoadipate pathway"/>
    <property type="evidence" value="ECO:0007669"/>
    <property type="project" value="UniProtKB-UniPathway"/>
</dbReference>
<dbReference type="Gene3D" id="1.20.1290.10">
    <property type="entry name" value="AhpD-like"/>
    <property type="match status" value="1"/>
</dbReference>
<dbReference type="InterPro" id="IPR052512">
    <property type="entry name" value="4CMD/NDH-1_regulator"/>
</dbReference>
<dbReference type="InterPro" id="IPR029032">
    <property type="entry name" value="AhpD-like"/>
</dbReference>
<dbReference type="InterPro" id="IPR003779">
    <property type="entry name" value="CMD-like"/>
</dbReference>
<dbReference type="InterPro" id="IPR012788">
    <property type="entry name" value="Decarb_PcaC"/>
</dbReference>
<dbReference type="NCBIfam" id="TIGR02425">
    <property type="entry name" value="decarb_PcaC"/>
    <property type="match status" value="1"/>
</dbReference>
<dbReference type="PANTHER" id="PTHR33570">
    <property type="entry name" value="4-CARBOXYMUCONOLACTONE DECARBOXYLASE FAMILY PROTEIN"/>
    <property type="match status" value="1"/>
</dbReference>
<dbReference type="PANTHER" id="PTHR33570:SF2">
    <property type="entry name" value="CARBOXYMUCONOLACTONE DECARBOXYLASE-LIKE DOMAIN-CONTAINING PROTEIN"/>
    <property type="match status" value="1"/>
</dbReference>
<dbReference type="Pfam" id="PF02627">
    <property type="entry name" value="CMD"/>
    <property type="match status" value="1"/>
</dbReference>
<dbReference type="SUPFAM" id="SSF69118">
    <property type="entry name" value="AhpD-like"/>
    <property type="match status" value="1"/>
</dbReference>
<name>DC4C_ACIAD</name>
<accession>P20370</accession>
<accession>Q6FBL0</accession>
<reference key="1">
    <citation type="journal article" date="1990" name="J. Bacteriol.">
        <title>DNA sequences of genes encoding Acinetobacter calcoaceticus protocatechuate 3,4-dioxygenase: evidence indicating shuffling of genes and of DNA sequences within genes during their evolutionary divergence.</title>
        <authorList>
            <person name="Hartnett C."/>
            <person name="Neidle E.L."/>
            <person name="Ngai K.-L."/>
            <person name="Ornston L.N."/>
        </authorList>
    </citation>
    <scope>NUCLEOTIDE SEQUENCE [GENOMIC DNA]</scope>
</reference>
<reference key="2">
    <citation type="journal article" date="2004" name="Nucleic Acids Res.">
        <title>Unique features revealed by the genome sequence of Acinetobacter sp. ADP1, a versatile and naturally transformation competent bacterium.</title>
        <authorList>
            <person name="Barbe V."/>
            <person name="Vallenet D."/>
            <person name="Fonknechten N."/>
            <person name="Kreimeyer A."/>
            <person name="Oztas S."/>
            <person name="Labarre L."/>
            <person name="Cruveiller S."/>
            <person name="Robert C."/>
            <person name="Duprat S."/>
            <person name="Wincker P."/>
            <person name="Ornston L.N."/>
            <person name="Weissenbach J."/>
            <person name="Marliere P."/>
            <person name="Cohen G.N."/>
            <person name="Medigue C."/>
        </authorList>
    </citation>
    <scope>NUCLEOTIDE SEQUENCE [LARGE SCALE GENOMIC DNA]</scope>
    <source>
        <strain>ATCC 33305 / BD413 / ADP1</strain>
    </source>
</reference>
<organism>
    <name type="scientific">Acinetobacter baylyi (strain ATCC 33305 / BD413 / ADP1)</name>
    <dbReference type="NCBI Taxonomy" id="62977"/>
    <lineage>
        <taxon>Bacteria</taxon>
        <taxon>Pseudomonadati</taxon>
        <taxon>Pseudomonadota</taxon>
        <taxon>Gammaproteobacteria</taxon>
        <taxon>Moraxellales</taxon>
        <taxon>Moraxellaceae</taxon>
        <taxon>Acinetobacter</taxon>
    </lineage>
</organism>
<sequence>MNDEQRYKQGLEVRTEVLGEKHVNRSLENLNDFNQDFQNFISRFAWGEVWSRPGLPRHTRSLVTIAVLLALGREDELRMHLRACFNNGVTKDELKELILHCSLYAGLPASNAAMHMAEEVFKDLGIAPEKVNKD</sequence>
<protein>
    <recommendedName>
        <fullName evidence="1">4-carboxymuconolactone decarboxylase</fullName>
        <shortName evidence="1">CMD</shortName>
        <ecNumber evidence="1">4.1.1.44</ecNumber>
    </recommendedName>
</protein>
<comment type="catalytic activity">
    <reaction evidence="1">
        <text>(R)-2-(carboxymethyl)-5-oxo-2,5-dihydro-2-furoate + H(+) = (4,5-dihydro-5-oxofuran-2-yl)-acetate + CO2</text>
        <dbReference type="Rhea" id="RHEA:23348"/>
        <dbReference type="ChEBI" id="CHEBI:15378"/>
        <dbReference type="ChEBI" id="CHEBI:16526"/>
        <dbReference type="ChEBI" id="CHEBI:58425"/>
        <dbReference type="ChEBI" id="CHEBI:58771"/>
        <dbReference type="EC" id="4.1.1.44"/>
    </reaction>
    <physiologicalReaction direction="left-to-right" evidence="1">
        <dbReference type="Rhea" id="RHEA:23349"/>
    </physiologicalReaction>
</comment>
<comment type="pathway">
    <text evidence="1">Aromatic compound metabolism; beta-ketoadipate pathway; 5-oxo-4,5-dihydro-2-furylacetate from 3-carboxy-cis,cis-muconate: step 2/2.</text>
</comment>
<comment type="similarity">
    <text evidence="2">Belongs to the carboxymuconolactone decarboxylase family.</text>
</comment>